<keyword id="KW-0378">Hydrolase</keyword>
<keyword id="KW-0719">Serine esterase</keyword>
<proteinExistence type="inferred from homology"/>
<feature type="chain" id="PRO_1000136525" description="Esterase FrsA">
    <location>
        <begin position="1"/>
        <end position="414"/>
    </location>
</feature>
<name>FRSA_SALNS</name>
<organism>
    <name type="scientific">Salmonella newport (strain SL254)</name>
    <dbReference type="NCBI Taxonomy" id="423368"/>
    <lineage>
        <taxon>Bacteria</taxon>
        <taxon>Pseudomonadati</taxon>
        <taxon>Pseudomonadota</taxon>
        <taxon>Gammaproteobacteria</taxon>
        <taxon>Enterobacterales</taxon>
        <taxon>Enterobacteriaceae</taxon>
        <taxon>Salmonella</taxon>
    </lineage>
</organism>
<sequence length="414" mass="47160">MTQANLSETLFKPRFKHTETSTLVRRFNRGSQPPMQSALDGKNVPHWYRMINRLMWIWRGVDPREILDVQARIVMSDAERTDDDLYDTVIGYRGGNWIYEWAKQAMDWQQKACQEQDAMRSGRYWLHASTLYNIAAYPHLKGDELAEQAQALANRAYEEAAQRLPGSLREMEFAVPGGSPVTAFLHMPKGDGPFPTVLMCGGLDAMQTDYYTLYERYFAPRGIAMLTLDMPSVGFSSKWKLTQDSSLLHQHVLKALPNVPWVDHTRVAAFGFRFGANVAVRLAYLEAPRLKAVACLGPVVHALLSDPQRQSTVPEMYLDVLASRLGMHDASDEALRVELNRYSLKVQGLLGRRCPTPMLSGFWKNDPFSPEEESRLITTSSSDGKLIEIPFNPVYRNFDRALQEITDWINHRLC</sequence>
<comment type="function">
    <text evidence="1">Catalyzes the hydrolysis of esters.</text>
</comment>
<comment type="catalytic activity">
    <reaction evidence="1">
        <text>a carboxylic ester + H2O = an alcohol + a carboxylate + H(+)</text>
        <dbReference type="Rhea" id="RHEA:21164"/>
        <dbReference type="ChEBI" id="CHEBI:15377"/>
        <dbReference type="ChEBI" id="CHEBI:15378"/>
        <dbReference type="ChEBI" id="CHEBI:29067"/>
        <dbReference type="ChEBI" id="CHEBI:30879"/>
        <dbReference type="ChEBI" id="CHEBI:33308"/>
        <dbReference type="EC" id="3.1.1.1"/>
    </reaction>
</comment>
<comment type="similarity">
    <text evidence="1">Belongs to the FrsA family.</text>
</comment>
<protein>
    <recommendedName>
        <fullName evidence="1">Esterase FrsA</fullName>
        <ecNumber evidence="1">3.1.1.1</ecNumber>
    </recommendedName>
</protein>
<evidence type="ECO:0000255" key="1">
    <source>
        <dbReference type="HAMAP-Rule" id="MF_01063"/>
    </source>
</evidence>
<gene>
    <name evidence="1" type="primary">frsA</name>
    <name type="ordered locus">SNSL254_A0357</name>
</gene>
<reference key="1">
    <citation type="journal article" date="2011" name="J. Bacteriol.">
        <title>Comparative genomics of 28 Salmonella enterica isolates: evidence for CRISPR-mediated adaptive sublineage evolution.</title>
        <authorList>
            <person name="Fricke W.F."/>
            <person name="Mammel M.K."/>
            <person name="McDermott P.F."/>
            <person name="Tartera C."/>
            <person name="White D.G."/>
            <person name="Leclerc J.E."/>
            <person name="Ravel J."/>
            <person name="Cebula T.A."/>
        </authorList>
    </citation>
    <scope>NUCLEOTIDE SEQUENCE [LARGE SCALE GENOMIC DNA]</scope>
    <source>
        <strain>SL254</strain>
    </source>
</reference>
<accession>B4SVW0</accession>
<dbReference type="EC" id="3.1.1.1" evidence="1"/>
<dbReference type="EMBL" id="CP001113">
    <property type="protein sequence ID" value="ACF63994.1"/>
    <property type="molecule type" value="Genomic_DNA"/>
</dbReference>
<dbReference type="RefSeq" id="WP_000189588.1">
    <property type="nucleotide sequence ID" value="NZ_CCMR01000003.1"/>
</dbReference>
<dbReference type="SMR" id="B4SVW0"/>
<dbReference type="ESTHER" id="salty-yafa">
    <property type="family name" value="Duf_1100-R"/>
</dbReference>
<dbReference type="KEGG" id="see:SNSL254_A0357"/>
<dbReference type="HOGENOM" id="CLU_036819_0_0_6"/>
<dbReference type="Proteomes" id="UP000008824">
    <property type="component" value="Chromosome"/>
</dbReference>
<dbReference type="GO" id="GO:0106435">
    <property type="term" value="F:carboxylesterase activity"/>
    <property type="evidence" value="ECO:0007669"/>
    <property type="project" value="UniProtKB-EC"/>
</dbReference>
<dbReference type="FunFam" id="3.40.50.1820:FF:000022">
    <property type="entry name" value="Esterase FrsA"/>
    <property type="match status" value="1"/>
</dbReference>
<dbReference type="Gene3D" id="3.40.50.1820">
    <property type="entry name" value="alpha/beta hydrolase"/>
    <property type="match status" value="1"/>
</dbReference>
<dbReference type="HAMAP" id="MF_01063">
    <property type="entry name" value="FrsA"/>
    <property type="match status" value="1"/>
</dbReference>
<dbReference type="InterPro" id="IPR029058">
    <property type="entry name" value="AB_hydrolase_fold"/>
</dbReference>
<dbReference type="InterPro" id="IPR043423">
    <property type="entry name" value="FrsA"/>
</dbReference>
<dbReference type="InterPro" id="IPR010520">
    <property type="entry name" value="FrsA-like"/>
</dbReference>
<dbReference type="InterPro" id="IPR050261">
    <property type="entry name" value="FrsA_esterase"/>
</dbReference>
<dbReference type="NCBIfam" id="NF003460">
    <property type="entry name" value="PRK05077.1"/>
    <property type="match status" value="1"/>
</dbReference>
<dbReference type="PANTHER" id="PTHR22946">
    <property type="entry name" value="DIENELACTONE HYDROLASE DOMAIN-CONTAINING PROTEIN-RELATED"/>
    <property type="match status" value="1"/>
</dbReference>
<dbReference type="PANTHER" id="PTHR22946:SF4">
    <property type="entry name" value="ESTERASE FRSA"/>
    <property type="match status" value="1"/>
</dbReference>
<dbReference type="Pfam" id="PF06500">
    <property type="entry name" value="FrsA-like"/>
    <property type="match status" value="1"/>
</dbReference>
<dbReference type="SUPFAM" id="SSF53474">
    <property type="entry name" value="alpha/beta-Hydrolases"/>
    <property type="match status" value="1"/>
</dbReference>